<comment type="function">
    <text evidence="1 4 5">Tubulin-folding protein implicated in the first step of the tubulin folding pathway and required for tubulin complex assembly. Involved in the regulation of microtubule polymerization or depolymerization, it modulates microtubule dynamics by capturing GTP-bound beta-tubulin (TUBB). Its ability to interact with beta tubulin is regulated via its interaction with ARL2. Acts as a GTPase-activating protein (GAP) for ARL2. Induces microtubule disruption in absence of ARL2. Increases degradation of beta tubulin, when overexpressed in polarized cells. Promotes epithelial cell detachment, a process antagonized by ARL2. Induces tight adherens and tight junctions disassembly at the lateral cell membrane. Required for correct assembly and maintenance of the mitotic spindle, and proper progression of mitosis. Involved in neuron morphogenesis.</text>
</comment>
<comment type="subunit">
    <text evidence="1 3 4">Found in a complex with at least ARL2, PPP2CB, PPP2R1A, PPP2R2A, PPP2R5E and TBCD. Interacts with PPP2CB. Part of a supercomplex made of cofactors A to E. Cofactors A and D function by capturing and stabilizing tubulin in a quasi-native conformation. Cofactor E binds to the cofactor D-tubulin complex; interaction with cofactor C then causes the release of tubulin polypeptides that are committed to the native state. Interacts with ARL2; interaction is enhanced with the GDP-bound form of ARL2. Does not interact with ARL3, ARL4A and ARL4D. Interacts with beta tubulin. Interacts with TBCE (By similarity) (PubMed:12912990, PubMed:17704193).</text>
</comment>
<comment type="subcellular location">
    <subcellularLocation>
        <location evidence="4">Cell junction</location>
        <location evidence="4">Tight junction</location>
    </subcellularLocation>
    <subcellularLocation>
        <location evidence="4">Lateral cell membrane</location>
    </subcellularLocation>
    <subcellularLocation>
        <location evidence="4">Cytoplasm</location>
    </subcellularLocation>
    <subcellularLocation>
        <location evidence="4">Cell junction</location>
        <location evidence="4">Adherens junction</location>
    </subcellularLocation>
    <subcellularLocation>
        <location evidence="1">Cytoplasm</location>
        <location evidence="1">Cytoskeleton</location>
        <location evidence="1">Microtubule organizing center</location>
        <location evidence="1">Centrosome</location>
    </subcellularLocation>
    <text evidence="4">Localized in cell-cell contacts.</text>
</comment>
<comment type="similarity">
    <text evidence="6">Belongs to the TBCD family.</text>
</comment>
<gene>
    <name type="primary">TBCD</name>
</gene>
<evidence type="ECO:0000250" key="1">
    <source>
        <dbReference type="UniProtKB" id="Q9BTW9"/>
    </source>
</evidence>
<evidence type="ECO:0000256" key="2">
    <source>
        <dbReference type="SAM" id="MobiDB-lite"/>
    </source>
</evidence>
<evidence type="ECO:0000269" key="3">
    <source>
    </source>
</evidence>
<evidence type="ECO:0000269" key="4">
    <source>
    </source>
</evidence>
<evidence type="ECO:0000269" key="5">
    <source>
    </source>
</evidence>
<evidence type="ECO:0000305" key="6"/>
<keyword id="KW-0965">Cell junction</keyword>
<keyword id="KW-1003">Cell membrane</keyword>
<keyword id="KW-0143">Chaperone</keyword>
<keyword id="KW-0963">Cytoplasm</keyword>
<keyword id="KW-0206">Cytoskeleton</keyword>
<keyword id="KW-0343">GTPase activation</keyword>
<keyword id="KW-0472">Membrane</keyword>
<keyword id="KW-1185">Reference proteome</keyword>
<keyword id="KW-0677">Repeat</keyword>
<keyword id="KW-0796">Tight junction</keyword>
<feature type="chain" id="PRO_0000080048" description="Tubulin-specific chaperone D">
    <location>
        <begin position="1"/>
        <end position="1199"/>
    </location>
</feature>
<feature type="repeat" description="HEAT 1">
    <location>
        <begin position="368"/>
        <end position="406"/>
    </location>
</feature>
<feature type="repeat" description="HEAT 2">
    <location>
        <begin position="603"/>
        <end position="639"/>
    </location>
</feature>
<feature type="repeat" description="HEAT 3">
    <location>
        <begin position="757"/>
        <end position="793"/>
    </location>
</feature>
<feature type="repeat" description="HEAT 4">
    <location>
        <begin position="1111"/>
        <end position="1147"/>
    </location>
</feature>
<feature type="region of interest" description="Disordered" evidence="2">
    <location>
        <begin position="1"/>
        <end position="23"/>
    </location>
</feature>
<feature type="region of interest" description="Disordered" evidence="2">
    <location>
        <begin position="337"/>
        <end position="361"/>
    </location>
</feature>
<feature type="compositionally biased region" description="Acidic residues" evidence="2">
    <location>
        <begin position="14"/>
        <end position="23"/>
    </location>
</feature>
<organism>
    <name type="scientific">Bos taurus</name>
    <name type="common">Bovine</name>
    <dbReference type="NCBI Taxonomy" id="9913"/>
    <lineage>
        <taxon>Eukaryota</taxon>
        <taxon>Metazoa</taxon>
        <taxon>Chordata</taxon>
        <taxon>Craniata</taxon>
        <taxon>Vertebrata</taxon>
        <taxon>Euteleostomi</taxon>
        <taxon>Mammalia</taxon>
        <taxon>Eutheria</taxon>
        <taxon>Laurasiatheria</taxon>
        <taxon>Artiodactyla</taxon>
        <taxon>Ruminantia</taxon>
        <taxon>Pecora</taxon>
        <taxon>Bovidae</taxon>
        <taxon>Bovinae</taxon>
        <taxon>Bos</taxon>
    </lineage>
</organism>
<dbReference type="EMBL" id="U61233">
    <property type="protein sequence ID" value="AAB17537.1"/>
    <property type="molecule type" value="mRNA"/>
</dbReference>
<dbReference type="PIR" id="T18522">
    <property type="entry name" value="T18522"/>
</dbReference>
<dbReference type="RefSeq" id="NP_776619.1">
    <property type="nucleotide sequence ID" value="NM_174194.2"/>
</dbReference>
<dbReference type="FunCoup" id="Q28205">
    <property type="interactions" value="4749"/>
</dbReference>
<dbReference type="STRING" id="9913.ENSBTAP00000065270"/>
<dbReference type="PaxDb" id="9913-ENSBTAP00000020484"/>
<dbReference type="GeneID" id="281515"/>
<dbReference type="KEGG" id="bta:281515"/>
<dbReference type="CTD" id="6904"/>
<dbReference type="VEuPathDB" id="HostDB:ENSBTAG00000015414"/>
<dbReference type="eggNOG" id="KOG1943">
    <property type="taxonomic scope" value="Eukaryota"/>
</dbReference>
<dbReference type="HOGENOM" id="CLU_003043_0_0_1"/>
<dbReference type="InParanoid" id="Q28205"/>
<dbReference type="OrthoDB" id="10253476at2759"/>
<dbReference type="TreeFam" id="TF105754"/>
<dbReference type="Proteomes" id="UP000009136">
    <property type="component" value="Chromosome 19"/>
</dbReference>
<dbReference type="Bgee" id="ENSBTAG00000015414">
    <property type="expression patterns" value="Expressed in cortex of kidney and 105 other cell types or tissues"/>
</dbReference>
<dbReference type="GO" id="GO:0005912">
    <property type="term" value="C:adherens junction"/>
    <property type="evidence" value="ECO:0007669"/>
    <property type="project" value="UniProtKB-SubCell"/>
</dbReference>
<dbReference type="GO" id="GO:0005923">
    <property type="term" value="C:bicellular tight junction"/>
    <property type="evidence" value="ECO:0000314"/>
    <property type="project" value="UniProtKB"/>
</dbReference>
<dbReference type="GO" id="GO:0005813">
    <property type="term" value="C:centrosome"/>
    <property type="evidence" value="ECO:0000250"/>
    <property type="project" value="UniProtKB"/>
</dbReference>
<dbReference type="GO" id="GO:0005829">
    <property type="term" value="C:cytosol"/>
    <property type="evidence" value="ECO:0000304"/>
    <property type="project" value="Reactome"/>
</dbReference>
<dbReference type="GO" id="GO:0016328">
    <property type="term" value="C:lateral plasma membrane"/>
    <property type="evidence" value="ECO:0000314"/>
    <property type="project" value="UniProtKB"/>
</dbReference>
<dbReference type="GO" id="GO:0048487">
    <property type="term" value="F:beta-tubulin binding"/>
    <property type="evidence" value="ECO:0000314"/>
    <property type="project" value="UniProtKB"/>
</dbReference>
<dbReference type="GO" id="GO:0005096">
    <property type="term" value="F:GTPase activator activity"/>
    <property type="evidence" value="ECO:0000314"/>
    <property type="project" value="UniProtKB"/>
</dbReference>
<dbReference type="GO" id="GO:0034333">
    <property type="term" value="P:adherens junction assembly"/>
    <property type="evidence" value="ECO:0000314"/>
    <property type="project" value="UniProtKB"/>
</dbReference>
<dbReference type="GO" id="GO:0070830">
    <property type="term" value="P:bicellular tight junction assembly"/>
    <property type="evidence" value="ECO:0000314"/>
    <property type="project" value="UniProtKB"/>
</dbReference>
<dbReference type="GO" id="GO:0048667">
    <property type="term" value="P:cell morphogenesis involved in neuron differentiation"/>
    <property type="evidence" value="ECO:0000250"/>
    <property type="project" value="UniProtKB"/>
</dbReference>
<dbReference type="GO" id="GO:0000226">
    <property type="term" value="P:microtubule cytoskeleton organization"/>
    <property type="evidence" value="ECO:0000318"/>
    <property type="project" value="GO_Central"/>
</dbReference>
<dbReference type="GO" id="GO:0000278">
    <property type="term" value="P:mitotic cell cycle"/>
    <property type="evidence" value="ECO:0000250"/>
    <property type="project" value="UniProtKB"/>
</dbReference>
<dbReference type="GO" id="GO:0010812">
    <property type="term" value="P:negative regulation of cell-substrate adhesion"/>
    <property type="evidence" value="ECO:0000314"/>
    <property type="project" value="UniProtKB"/>
</dbReference>
<dbReference type="GO" id="GO:0031115">
    <property type="term" value="P:negative regulation of microtubule polymerization"/>
    <property type="evidence" value="ECO:0000314"/>
    <property type="project" value="UniProtKB"/>
</dbReference>
<dbReference type="GO" id="GO:0007023">
    <property type="term" value="P:post-chaperonin tubulin folding pathway"/>
    <property type="evidence" value="ECO:0007669"/>
    <property type="project" value="InterPro"/>
</dbReference>
<dbReference type="GO" id="GO:0006457">
    <property type="term" value="P:protein folding"/>
    <property type="evidence" value="ECO:0000314"/>
    <property type="project" value="UniProtKB"/>
</dbReference>
<dbReference type="GO" id="GO:0007021">
    <property type="term" value="P:tubulin complex assembly"/>
    <property type="evidence" value="ECO:0007669"/>
    <property type="project" value="InterPro"/>
</dbReference>
<dbReference type="FunFam" id="1.25.10.10:FF:000268">
    <property type="entry name" value="tubulin-specific chaperone D"/>
    <property type="match status" value="1"/>
</dbReference>
<dbReference type="Gene3D" id="1.25.10.10">
    <property type="entry name" value="Leucine-rich Repeat Variant"/>
    <property type="match status" value="3"/>
</dbReference>
<dbReference type="InterPro" id="IPR011989">
    <property type="entry name" value="ARM-like"/>
</dbReference>
<dbReference type="InterPro" id="IPR016024">
    <property type="entry name" value="ARM-type_fold"/>
</dbReference>
<dbReference type="InterPro" id="IPR033162">
    <property type="entry name" value="TBCD"/>
</dbReference>
<dbReference type="InterPro" id="IPR022577">
    <property type="entry name" value="Tubulin_specific_chaperoneD_C"/>
</dbReference>
<dbReference type="PANTHER" id="PTHR12658">
    <property type="entry name" value="BETA-TUBULIN COFACTOR D"/>
    <property type="match status" value="1"/>
</dbReference>
<dbReference type="PANTHER" id="PTHR12658:SF0">
    <property type="entry name" value="TUBULIN-SPECIFIC CHAPERONE D"/>
    <property type="match status" value="1"/>
</dbReference>
<dbReference type="Pfam" id="PF23579">
    <property type="entry name" value="ARM_TBCD"/>
    <property type="match status" value="1"/>
</dbReference>
<dbReference type="Pfam" id="PF12612">
    <property type="entry name" value="TFCD_C"/>
    <property type="match status" value="1"/>
</dbReference>
<dbReference type="SUPFAM" id="SSF48371">
    <property type="entry name" value="ARM repeat"/>
    <property type="match status" value="2"/>
</dbReference>
<name>TBCD_BOVIN</name>
<reference key="1">
    <citation type="journal article" date="1996" name="Cell">
        <title>Pathway leading to correctly folded beta-tubulin.</title>
        <authorList>
            <person name="Tian G."/>
            <person name="Huang Y."/>
            <person name="Rommelaere H."/>
            <person name="Vandekerckhove J."/>
            <person name="Ampe C."/>
            <person name="Cowan N.J."/>
        </authorList>
    </citation>
    <scope>NUCLEOTIDE SEQUENCE [MRNA]</scope>
</reference>
<reference key="2">
    <citation type="journal article" date="2003" name="J. Biol. Chem.">
        <title>Cytosolic Arl2 is complexed with cofactor D and protein phosphatase 2A.</title>
        <authorList>
            <person name="Shern J.F."/>
            <person name="Sharer J.D."/>
            <person name="Pallas D.C."/>
            <person name="Bartolini F."/>
            <person name="Cowan N.J."/>
            <person name="Reed M.S."/>
            <person name="Pohl J."/>
            <person name="Kahn R.A."/>
        </authorList>
    </citation>
    <scope>INTERACTION WITH PPP2CB</scope>
    <scope>IDENTIFICATION IN A COMPLEX WITH ARL2; PPP2CB; PPP2R2A; PPP2R5E AND TBCD</scope>
</reference>
<reference key="3">
    <citation type="journal article" date="2008" name="FASEB J.">
        <title>Beta-tubulin cofactor D and ARL2 take part in apical junctional complex disassembly and abrogate epithelial structure.</title>
        <authorList>
            <person name="Shultz T."/>
            <person name="Shmuel M."/>
            <person name="Hyman T."/>
            <person name="Altschuler Y."/>
        </authorList>
    </citation>
    <scope>FUNCTION</scope>
    <scope>INTERACTION WITH ARL2</scope>
    <scope>SUBCELLULAR LOCATION</scope>
</reference>
<reference key="4">
    <citation type="journal article" date="2010" name="Cytoskeleton">
        <title>Effect of TBCD and its regulatory interactor Arl2 on tubulin and microtubule integrity.</title>
        <authorList>
            <person name="Tian G."/>
            <person name="Thomas S."/>
            <person name="Cowan N.J."/>
        </authorList>
    </citation>
    <scope>FUNCTION</scope>
    <scope>IDENTIFICATION BY MASS SPECTROMETRY</scope>
</reference>
<sequence length="1199" mass="133014">MALSEEPAAGAAEDPVEDPVEDAGEDAALACGAALESFGESAETRELLGHLPAVLADRSAREGALERFRVIMDKYQEQPHLLDPHLEWMLNLLLEFVQNKTSPADLVHLAFKFLYIISKVRGYKTFLRLFPHEVADVQPVLDMFTNQNPKDHETWETRYMLLLWLSVTCLIPFDFSRLDGNLSQPGQERASTMDRILQVAESYLVVSDKARDAAAVLVSKFVTRPDVKQKKMASFLDWSLCTLARSSFQTIEGVIAMDGTLQALAQIFKHGKREDCLPYAATVLQCLDSCRLPDSNQTLLRKLGVKLVQRLGLTFLKPQVAKWRYQRGCRSLAESLQHSIQNPREPVTQAETPDSDGQDDVPEEVESVIEQLLVGLKDKDTIVRWSAAKGIGRMAGRLPKELADDVTGSVLDCFSFQETDSAWHGGCLALAELGRRGLLLPSRLSDVVPVILRALTYEEKRGACSVGSNVRDAACYVCWAFARAYEPQELKPFVAAISSALVIATVFDRDVNCRRAASAAFQENVGRQGTFPHGIDILTTADYFAVGNRSNCFLVISMFIAGFPEYTQPMIEHLVTMKVGHWDGTIRELSAKALRNLAQRAPEHTAREVFPRLLSMTQSPDLHTRHGAVLACAEVARSLHTLATQQGRPVSDFLDEKAMHGLKQIHQQLYDRQLYRGLGGELMRQAVCILIENVALSKMPFRGDAVIDGWQWLINDTLKNLHLISSHSRQHIKEAAVSALAALCSEYHAQEPGEAEAAAQEELVKLYLAELQSPEEMTRCGCALALGALPAFFLKGRLRQVLAGLRAVTHISPKDVSFAEARRDALKAISRICQTVGVRAEGPPDEAVCRENVSQIYCTLLDCLKDYTTDSRGDVGAWVREAAMTSLMDLTLLLGRNQPELIEAPLCQQLMCCLAQQASEKIDRFRAHAARVFLALLHADSPAIPHVPARPELERLFPRAAVASVNWGAPSQAFPRMARLLGLPAYRYHVLLGLAVSVGGLTESTVRYSTQGLFEYMKEIQNDPAALEDFGGTLLQVFEDNLLNDRVSVPLLKTLDQMLANGCFDIFTAQENHPFCVKLLALCKEEIKKSKDVQKLRSSIAVFCGLVQFPGDVRRKVLLQLFLLLCHPFPVIRKNTASQVYEMVLTYDVVPTAVLDEVMAVLSSTAWDAELPVVRAQRNRLCDLLGVPRPQLVPKPAVR</sequence>
<protein>
    <recommendedName>
        <fullName>Tubulin-specific chaperone D</fullName>
    </recommendedName>
    <alternativeName>
        <fullName>Beta-tubulin cofactor D</fullName>
    </alternativeName>
    <alternativeName>
        <fullName>Tubulin-folding cofactor D</fullName>
    </alternativeName>
</protein>
<proteinExistence type="evidence at protein level"/>
<accession>Q28205</accession>